<keyword id="KW-0963">Cytoplasm</keyword>
<keyword id="KW-0489">Methyltransferase</keyword>
<keyword id="KW-0545">Nucleotide biosynthesis</keyword>
<keyword id="KW-0808">Transferase</keyword>
<feature type="chain" id="PRO_1000073876" description="Thymidylate synthase">
    <location>
        <begin position="1"/>
        <end position="274"/>
    </location>
</feature>
<feature type="active site" description="Nucleophile" evidence="1">
    <location>
        <position position="156"/>
    </location>
</feature>
<feature type="binding site" description="in other chain" evidence="1">
    <location>
        <position position="21"/>
    </location>
    <ligand>
        <name>dUMP</name>
        <dbReference type="ChEBI" id="CHEBI:246422"/>
        <note>ligand shared between dimeric partners</note>
    </ligand>
</feature>
<feature type="binding site" evidence="1">
    <location>
        <position position="51"/>
    </location>
    <ligand>
        <name>(6R)-5,10-methylene-5,6,7,8-tetrahydrofolate</name>
        <dbReference type="ChEBI" id="CHEBI:15636"/>
    </ligand>
</feature>
<feature type="binding site" evidence="1">
    <location>
        <begin position="123"/>
        <end position="124"/>
    </location>
    <ligand>
        <name>dUMP</name>
        <dbReference type="ChEBI" id="CHEBI:246422"/>
        <note>ligand shared between dimeric partners</note>
    </ligand>
</feature>
<feature type="binding site" description="in other chain" evidence="1">
    <location>
        <begin position="176"/>
        <end position="179"/>
    </location>
    <ligand>
        <name>dUMP</name>
        <dbReference type="ChEBI" id="CHEBI:246422"/>
        <note>ligand shared between dimeric partners</note>
    </ligand>
</feature>
<feature type="binding site" evidence="1">
    <location>
        <position position="179"/>
    </location>
    <ligand>
        <name>(6R)-5,10-methylene-5,6,7,8-tetrahydrofolate</name>
        <dbReference type="ChEBI" id="CHEBI:15636"/>
    </ligand>
</feature>
<feature type="binding site" description="in other chain" evidence="1">
    <location>
        <position position="187"/>
    </location>
    <ligand>
        <name>dUMP</name>
        <dbReference type="ChEBI" id="CHEBI:246422"/>
        <note>ligand shared between dimeric partners</note>
    </ligand>
</feature>
<feature type="binding site" description="in other chain" evidence="1">
    <location>
        <begin position="217"/>
        <end position="219"/>
    </location>
    <ligand>
        <name>dUMP</name>
        <dbReference type="ChEBI" id="CHEBI:246422"/>
        <note>ligand shared between dimeric partners</note>
    </ligand>
</feature>
<feature type="binding site" evidence="1">
    <location>
        <position position="273"/>
    </location>
    <ligand>
        <name>(6R)-5,10-methylene-5,6,7,8-tetrahydrofolate</name>
        <dbReference type="ChEBI" id="CHEBI:15636"/>
    </ligand>
</feature>
<evidence type="ECO:0000255" key="1">
    <source>
        <dbReference type="HAMAP-Rule" id="MF_00008"/>
    </source>
</evidence>
<comment type="function">
    <text evidence="1">Catalyzes the reductive methylation of 2'-deoxyuridine-5'-monophosphate (dUMP) to 2'-deoxythymidine-5'-monophosphate (dTMP) while utilizing 5,10-methylenetetrahydrofolate (mTHF) as the methyl donor and reductant in the reaction, yielding dihydrofolate (DHF) as a by-product. This enzymatic reaction provides an intracellular de novo source of dTMP, an essential precursor for DNA biosynthesis.</text>
</comment>
<comment type="catalytic activity">
    <reaction evidence="1">
        <text>dUMP + (6R)-5,10-methylene-5,6,7,8-tetrahydrofolate = 7,8-dihydrofolate + dTMP</text>
        <dbReference type="Rhea" id="RHEA:12104"/>
        <dbReference type="ChEBI" id="CHEBI:15636"/>
        <dbReference type="ChEBI" id="CHEBI:57451"/>
        <dbReference type="ChEBI" id="CHEBI:63528"/>
        <dbReference type="ChEBI" id="CHEBI:246422"/>
        <dbReference type="EC" id="2.1.1.45"/>
    </reaction>
</comment>
<comment type="pathway">
    <text evidence="1">Pyrimidine metabolism; dTTP biosynthesis.</text>
</comment>
<comment type="subunit">
    <text evidence="1">Homodimer.</text>
</comment>
<comment type="subcellular location">
    <subcellularLocation>
        <location evidence="1">Cytoplasm</location>
    </subcellularLocation>
</comment>
<comment type="similarity">
    <text evidence="1">Belongs to the thymidylate synthase family. Bacterial-type ThyA subfamily.</text>
</comment>
<protein>
    <recommendedName>
        <fullName evidence="1">Thymidylate synthase</fullName>
        <shortName evidence="1">TS</shortName>
        <shortName evidence="1">TSase</shortName>
        <ecNumber evidence="1">2.1.1.45</ecNumber>
    </recommendedName>
</protein>
<accession>B0TYI1</accession>
<name>TYSY_FRAP2</name>
<gene>
    <name evidence="1" type="primary">thyA</name>
    <name type="ordered locus">Fphi_1432</name>
</gene>
<proteinExistence type="inferred from homology"/>
<reference key="1">
    <citation type="submission" date="2007-12" db="EMBL/GenBank/DDBJ databases">
        <title>Complete sequence of chromosome of Francisella philomiragia subsp. philomiragia ATCC 25017.</title>
        <authorList>
            <consortium name="US DOE Joint Genome Institute"/>
            <person name="Copeland A."/>
            <person name="Lucas S."/>
            <person name="Lapidus A."/>
            <person name="Barry K."/>
            <person name="Detter J.C."/>
            <person name="Glavina del Rio T."/>
            <person name="Hammon N."/>
            <person name="Israni S."/>
            <person name="Dalin E."/>
            <person name="Tice H."/>
            <person name="Pitluck S."/>
            <person name="Chain P."/>
            <person name="Malfatti S."/>
            <person name="Shin M."/>
            <person name="Vergez L."/>
            <person name="Schmutz J."/>
            <person name="Larimer F."/>
            <person name="Land M."/>
            <person name="Hauser L."/>
            <person name="Richardson P."/>
        </authorList>
    </citation>
    <scope>NUCLEOTIDE SEQUENCE [LARGE SCALE GENOMIC DNA]</scope>
    <source>
        <strain>ATCC 25017 / CCUG 19701 / FSC 153 / O#319-036</strain>
    </source>
</reference>
<organism>
    <name type="scientific">Francisella philomiragia subsp. philomiragia (strain ATCC 25017 / CCUG 19701 / FSC 153 / O#319-036)</name>
    <dbReference type="NCBI Taxonomy" id="484022"/>
    <lineage>
        <taxon>Bacteria</taxon>
        <taxon>Pseudomonadati</taxon>
        <taxon>Pseudomonadota</taxon>
        <taxon>Gammaproteobacteria</taxon>
        <taxon>Thiotrichales</taxon>
        <taxon>Francisellaceae</taxon>
        <taxon>Francisella</taxon>
    </lineage>
</organism>
<sequence length="274" mass="31416">MREYLNFLKYIKDNGTKKGDRTGTGTTSIFGYQMRFDLQQGFPLVTTKKIHIPSVVHELLWFLSGSTNVKYLNDNKVRIWNEWATEEGELGPIYGKQWRDFNGEGIDQIAEVIEMLKTNPNSRRILVSAWNPCVVPSEKISPQENVAKGNSALPPCHAMFQFYIADNKLSCMLTQRSADAFLGVPFNIASYSLLTHMIAQQCDLDVGEFIWSGGDCHIYNNHIEQVNEQLSREPLDLPTLKILRKPSSIFDYKYEDFEFQNYKHHPAIKAKISV</sequence>
<dbReference type="EC" id="2.1.1.45" evidence="1"/>
<dbReference type="EMBL" id="CP000937">
    <property type="protein sequence ID" value="ABZ87657.1"/>
    <property type="molecule type" value="Genomic_DNA"/>
</dbReference>
<dbReference type="SMR" id="B0TYI1"/>
<dbReference type="KEGG" id="fph:Fphi_1432"/>
<dbReference type="eggNOG" id="COG0207">
    <property type="taxonomic scope" value="Bacteria"/>
</dbReference>
<dbReference type="HOGENOM" id="CLU_021669_0_0_6"/>
<dbReference type="UniPathway" id="UPA00575"/>
<dbReference type="GO" id="GO:0005829">
    <property type="term" value="C:cytosol"/>
    <property type="evidence" value="ECO:0007669"/>
    <property type="project" value="TreeGrafter"/>
</dbReference>
<dbReference type="GO" id="GO:0004799">
    <property type="term" value="F:thymidylate synthase activity"/>
    <property type="evidence" value="ECO:0007669"/>
    <property type="project" value="UniProtKB-UniRule"/>
</dbReference>
<dbReference type="GO" id="GO:0006231">
    <property type="term" value="P:dTMP biosynthetic process"/>
    <property type="evidence" value="ECO:0007669"/>
    <property type="project" value="UniProtKB-UniRule"/>
</dbReference>
<dbReference type="GO" id="GO:0006235">
    <property type="term" value="P:dTTP biosynthetic process"/>
    <property type="evidence" value="ECO:0007669"/>
    <property type="project" value="UniProtKB-UniRule"/>
</dbReference>
<dbReference type="GO" id="GO:0032259">
    <property type="term" value="P:methylation"/>
    <property type="evidence" value="ECO:0007669"/>
    <property type="project" value="UniProtKB-KW"/>
</dbReference>
<dbReference type="CDD" id="cd00351">
    <property type="entry name" value="TS_Pyrimidine_HMase"/>
    <property type="match status" value="1"/>
</dbReference>
<dbReference type="FunFam" id="3.30.572.10:FF:000013">
    <property type="entry name" value="Thymidylate synthase"/>
    <property type="match status" value="1"/>
</dbReference>
<dbReference type="Gene3D" id="3.30.572.10">
    <property type="entry name" value="Thymidylate synthase/dCMP hydroxymethylase domain"/>
    <property type="match status" value="1"/>
</dbReference>
<dbReference type="HAMAP" id="MF_00008">
    <property type="entry name" value="Thymidy_synth_bact"/>
    <property type="match status" value="1"/>
</dbReference>
<dbReference type="InterPro" id="IPR045097">
    <property type="entry name" value="Thymidate_synth/dCMP_Mease"/>
</dbReference>
<dbReference type="InterPro" id="IPR023451">
    <property type="entry name" value="Thymidate_synth/dCMP_Mease_dom"/>
</dbReference>
<dbReference type="InterPro" id="IPR036926">
    <property type="entry name" value="Thymidate_synth/dCMP_Mease_sf"/>
</dbReference>
<dbReference type="InterPro" id="IPR000398">
    <property type="entry name" value="Thymidylate_synthase"/>
</dbReference>
<dbReference type="NCBIfam" id="NF002497">
    <property type="entry name" value="PRK01827.1-3"/>
    <property type="match status" value="1"/>
</dbReference>
<dbReference type="NCBIfam" id="NF002499">
    <property type="entry name" value="PRK01827.1-5"/>
    <property type="match status" value="1"/>
</dbReference>
<dbReference type="NCBIfam" id="TIGR03284">
    <property type="entry name" value="thym_sym"/>
    <property type="match status" value="2"/>
</dbReference>
<dbReference type="PANTHER" id="PTHR11548">
    <property type="entry name" value="THYMIDYLATE SYNTHASE 1"/>
    <property type="match status" value="1"/>
</dbReference>
<dbReference type="PANTHER" id="PTHR11548:SF1">
    <property type="entry name" value="THYMIDYLATE SYNTHASE 1"/>
    <property type="match status" value="1"/>
</dbReference>
<dbReference type="Pfam" id="PF00303">
    <property type="entry name" value="Thymidylat_synt"/>
    <property type="match status" value="1"/>
</dbReference>
<dbReference type="PRINTS" id="PR00108">
    <property type="entry name" value="THYMDSNTHASE"/>
</dbReference>
<dbReference type="SUPFAM" id="SSF55831">
    <property type="entry name" value="Thymidylate synthase/dCMP hydroxymethylase"/>
    <property type="match status" value="1"/>
</dbReference>